<organism>
    <name type="scientific">Bacillus licheniformis (strain ATCC 14580 / DSM 13 / JCM 2505 / CCUG 7422 / NBRC 12200 / NCIMB 9375 / NCTC 10341 / NRRL NRS-1264 / Gibson 46)</name>
    <dbReference type="NCBI Taxonomy" id="279010"/>
    <lineage>
        <taxon>Bacteria</taxon>
        <taxon>Bacillati</taxon>
        <taxon>Bacillota</taxon>
        <taxon>Bacilli</taxon>
        <taxon>Bacillales</taxon>
        <taxon>Bacillaceae</taxon>
        <taxon>Bacillus</taxon>
    </lineage>
</organism>
<accession>Q65LE3</accession>
<keyword id="KW-0046">Antibiotic resistance</keyword>
<keyword id="KW-1003">Cell membrane</keyword>
<keyword id="KW-0133">Cell shape</keyword>
<keyword id="KW-0961">Cell wall biogenesis/degradation</keyword>
<keyword id="KW-0378">Hydrolase</keyword>
<keyword id="KW-0472">Membrane</keyword>
<keyword id="KW-0573">Peptidoglycan synthesis</keyword>
<keyword id="KW-1185">Reference proteome</keyword>
<keyword id="KW-0812">Transmembrane</keyword>
<keyword id="KW-1133">Transmembrane helix</keyword>
<comment type="function">
    <text evidence="1">Catalyzes the dephosphorylation of undecaprenyl diphosphate (UPP). Confers resistance to bacitracin.</text>
</comment>
<comment type="catalytic activity">
    <reaction evidence="1">
        <text>di-trans,octa-cis-undecaprenyl diphosphate + H2O = di-trans,octa-cis-undecaprenyl phosphate + phosphate + H(+)</text>
        <dbReference type="Rhea" id="RHEA:28094"/>
        <dbReference type="ChEBI" id="CHEBI:15377"/>
        <dbReference type="ChEBI" id="CHEBI:15378"/>
        <dbReference type="ChEBI" id="CHEBI:43474"/>
        <dbReference type="ChEBI" id="CHEBI:58405"/>
        <dbReference type="ChEBI" id="CHEBI:60392"/>
        <dbReference type="EC" id="3.6.1.27"/>
    </reaction>
</comment>
<comment type="subcellular location">
    <subcellularLocation>
        <location evidence="1">Cell membrane</location>
        <topology evidence="1">Multi-pass membrane protein</topology>
    </subcellularLocation>
</comment>
<comment type="miscellaneous">
    <text>Bacitracin is thought to be involved in the inhibition of peptidoglycan synthesis by sequestering undecaprenyl diphosphate, thereby reducing the pool of lipid carrier available.</text>
</comment>
<comment type="similarity">
    <text evidence="1">Belongs to the UppP family.</text>
</comment>
<evidence type="ECO:0000255" key="1">
    <source>
        <dbReference type="HAMAP-Rule" id="MF_01006"/>
    </source>
</evidence>
<feature type="chain" id="PRO_0000151105" description="Undecaprenyl-diphosphatase 1">
    <location>
        <begin position="1"/>
        <end position="270"/>
    </location>
</feature>
<feature type="transmembrane region" description="Helical" evidence="1">
    <location>
        <begin position="41"/>
        <end position="61"/>
    </location>
</feature>
<feature type="transmembrane region" description="Helical" evidence="1">
    <location>
        <begin position="88"/>
        <end position="108"/>
    </location>
</feature>
<feature type="transmembrane region" description="Helical" evidence="1">
    <location>
        <begin position="117"/>
        <end position="137"/>
    </location>
</feature>
<feature type="transmembrane region" description="Helical" evidence="1">
    <location>
        <begin position="192"/>
        <end position="212"/>
    </location>
</feature>
<feature type="transmembrane region" description="Helical" evidence="1">
    <location>
        <begin position="218"/>
        <end position="238"/>
    </location>
</feature>
<feature type="transmembrane region" description="Helical" evidence="1">
    <location>
        <begin position="250"/>
        <end position="270"/>
    </location>
</feature>
<reference key="1">
    <citation type="journal article" date="2004" name="J. Mol. Microbiol. Biotechnol.">
        <title>The complete genome sequence of Bacillus licheniformis DSM13, an organism with great industrial potential.</title>
        <authorList>
            <person name="Veith B."/>
            <person name="Herzberg C."/>
            <person name="Steckel S."/>
            <person name="Feesche J."/>
            <person name="Maurer K.H."/>
            <person name="Ehrenreich P."/>
            <person name="Baeumer S."/>
            <person name="Henne A."/>
            <person name="Liesegang H."/>
            <person name="Merkl R."/>
            <person name="Ehrenreich A."/>
            <person name="Gottschalk G."/>
        </authorList>
    </citation>
    <scope>NUCLEOTIDE SEQUENCE [LARGE SCALE GENOMIC DNA]</scope>
    <source>
        <strain>ATCC 14580 / DSM 13 / JCM 2505 / CCUG 7422 / NBRC 12200 / NCIMB 9375 / NCTC 10341 / NRRL NRS-1264 / Gibson 46</strain>
    </source>
</reference>
<reference key="2">
    <citation type="journal article" date="2004" name="Genome Biol.">
        <title>Complete genome sequence of the industrial bacterium Bacillus licheniformis and comparisons with closely related Bacillus species.</title>
        <authorList>
            <person name="Rey M.W."/>
            <person name="Ramaiya P."/>
            <person name="Nelson B.A."/>
            <person name="Brody-Karpin S.D."/>
            <person name="Zaretsky E.J."/>
            <person name="Tang M."/>
            <person name="Lopez de Leon A."/>
            <person name="Xiang H."/>
            <person name="Gusti V."/>
            <person name="Clausen I.G."/>
            <person name="Olsen P.B."/>
            <person name="Rasmussen M.D."/>
            <person name="Andersen J.T."/>
            <person name="Joergensen P.L."/>
            <person name="Larsen T.S."/>
            <person name="Sorokin A."/>
            <person name="Bolotin A."/>
            <person name="Lapidus A."/>
            <person name="Galleron N."/>
            <person name="Ehrlich S.D."/>
            <person name="Berka R.M."/>
        </authorList>
    </citation>
    <scope>NUCLEOTIDE SEQUENCE [LARGE SCALE GENOMIC DNA]</scope>
    <source>
        <strain>ATCC 14580 / DSM 13 / JCM 2505 / CCUG 7422 / NBRC 12200 / NCIMB 9375 / NCTC 10341 / NRRL NRS-1264 / Gibson 46</strain>
    </source>
</reference>
<protein>
    <recommendedName>
        <fullName evidence="1">Undecaprenyl-diphosphatase 1</fullName>
        <ecNumber evidence="1">3.6.1.27</ecNumber>
    </recommendedName>
    <alternativeName>
        <fullName evidence="1">Bacitracin resistance protein 1</fullName>
    </alternativeName>
    <alternativeName>
        <fullName evidence="1">Undecaprenyl pyrophosphate phosphatase 1</fullName>
    </alternativeName>
</protein>
<dbReference type="EC" id="3.6.1.27" evidence="1"/>
<dbReference type="EMBL" id="AE017333">
    <property type="protein sequence ID" value="AAU40121.1"/>
    <property type="molecule type" value="Genomic_DNA"/>
</dbReference>
<dbReference type="EMBL" id="CP000002">
    <property type="protein sequence ID" value="AAU22775.1"/>
    <property type="molecule type" value="Genomic_DNA"/>
</dbReference>
<dbReference type="RefSeq" id="WP_003180571.1">
    <property type="nucleotide sequence ID" value="NC_006322.1"/>
</dbReference>
<dbReference type="SMR" id="Q65LE3"/>
<dbReference type="STRING" id="279010.BL03255"/>
<dbReference type="KEGG" id="bld:BLi01213"/>
<dbReference type="KEGG" id="bli:BL03255"/>
<dbReference type="eggNOG" id="COG1968">
    <property type="taxonomic scope" value="Bacteria"/>
</dbReference>
<dbReference type="HOGENOM" id="CLU_060296_1_2_9"/>
<dbReference type="Proteomes" id="UP000000606">
    <property type="component" value="Chromosome"/>
</dbReference>
<dbReference type="GO" id="GO:0005886">
    <property type="term" value="C:plasma membrane"/>
    <property type="evidence" value="ECO:0007669"/>
    <property type="project" value="UniProtKB-SubCell"/>
</dbReference>
<dbReference type="GO" id="GO:0050380">
    <property type="term" value="F:undecaprenyl-diphosphatase activity"/>
    <property type="evidence" value="ECO:0007669"/>
    <property type="project" value="UniProtKB-UniRule"/>
</dbReference>
<dbReference type="GO" id="GO:0071555">
    <property type="term" value="P:cell wall organization"/>
    <property type="evidence" value="ECO:0007669"/>
    <property type="project" value="UniProtKB-KW"/>
</dbReference>
<dbReference type="GO" id="GO:0009252">
    <property type="term" value="P:peptidoglycan biosynthetic process"/>
    <property type="evidence" value="ECO:0007669"/>
    <property type="project" value="UniProtKB-KW"/>
</dbReference>
<dbReference type="GO" id="GO:0008360">
    <property type="term" value="P:regulation of cell shape"/>
    <property type="evidence" value="ECO:0007669"/>
    <property type="project" value="UniProtKB-KW"/>
</dbReference>
<dbReference type="GO" id="GO:0046677">
    <property type="term" value="P:response to antibiotic"/>
    <property type="evidence" value="ECO:0007669"/>
    <property type="project" value="UniProtKB-UniRule"/>
</dbReference>
<dbReference type="HAMAP" id="MF_01006">
    <property type="entry name" value="Undec_diphosphatase"/>
    <property type="match status" value="1"/>
</dbReference>
<dbReference type="InterPro" id="IPR003824">
    <property type="entry name" value="UppP"/>
</dbReference>
<dbReference type="PANTHER" id="PTHR30622">
    <property type="entry name" value="UNDECAPRENYL-DIPHOSPHATASE"/>
    <property type="match status" value="1"/>
</dbReference>
<dbReference type="PANTHER" id="PTHR30622:SF2">
    <property type="entry name" value="UNDECAPRENYL-DIPHOSPHATASE"/>
    <property type="match status" value="1"/>
</dbReference>
<dbReference type="Pfam" id="PF02673">
    <property type="entry name" value="BacA"/>
    <property type="match status" value="1"/>
</dbReference>
<sequence>MDFLVLIKYILLGLLQGFTEPIPVSSSGHLVLAQHFLGLNIEGFSFELLMNAGSLIAVLLVYKNDIFRLAVNGLSYVTTKNEKGKADFRFIIYLIIATIPAGVIGVLFDDEISAFFKDGVRITAVTLLITGLALFLIRNLRGRKSDGEIRLRDAVIIGFSQMVALVPGISRSGATIVPAMALGLKSETALRFSFLLYIPVSLGGTILSITDIFHDPRLGELFLPYLFAFIASVIATYFSLRWFMNIMAKGNLVYFSIYCFVIGIAVLIFA</sequence>
<gene>
    <name evidence="1" type="primary">uppP1</name>
    <name type="ordered locus">BLi01213</name>
    <name type="ordered locus">BL03255</name>
</gene>
<name>UPPP1_BACLD</name>
<proteinExistence type="inferred from homology"/>